<name>RL6_ECTM1</name>
<accession>A4XZ75</accession>
<keyword id="KW-0687">Ribonucleoprotein</keyword>
<keyword id="KW-0689">Ribosomal protein</keyword>
<keyword id="KW-0694">RNA-binding</keyword>
<keyword id="KW-0699">rRNA-binding</keyword>
<evidence type="ECO:0000255" key="1">
    <source>
        <dbReference type="HAMAP-Rule" id="MF_01365"/>
    </source>
</evidence>
<evidence type="ECO:0000305" key="2"/>
<comment type="function">
    <text evidence="1">This protein binds to the 23S rRNA, and is important in its secondary structure. It is located near the subunit interface in the base of the L7/L12 stalk, and near the tRNA binding site of the peptidyltransferase center.</text>
</comment>
<comment type="subunit">
    <text evidence="1">Part of the 50S ribosomal subunit.</text>
</comment>
<comment type="similarity">
    <text evidence="1">Belongs to the universal ribosomal protein uL6 family.</text>
</comment>
<sequence>MSRVAKNPVVLPAGVEVKLAGQQLSVKGAKGALELNVHSSVEVIQEGSELRFAARNGDQQNKAMAGTTRALVNNMVIGVSQGFERKLQLVGVGYKAQAKGQVLNLALGFSHPIDYELPAGVVAETPNQTEILIKGIDKQLVGQVAAEIRDFRRPEPYKGKGVRYADEVVRRKEAKKK</sequence>
<organism>
    <name type="scientific">Ectopseudomonas mendocina (strain ymp)</name>
    <name type="common">Pseudomonas mendocina</name>
    <dbReference type="NCBI Taxonomy" id="399739"/>
    <lineage>
        <taxon>Bacteria</taxon>
        <taxon>Pseudomonadati</taxon>
        <taxon>Pseudomonadota</taxon>
        <taxon>Gammaproteobacteria</taxon>
        <taxon>Pseudomonadales</taxon>
        <taxon>Pseudomonadaceae</taxon>
        <taxon>Ectopseudomonas</taxon>
    </lineage>
</organism>
<protein>
    <recommendedName>
        <fullName evidence="1">Large ribosomal subunit protein uL6</fullName>
    </recommendedName>
    <alternativeName>
        <fullName evidence="2">50S ribosomal protein L6</fullName>
    </alternativeName>
</protein>
<gene>
    <name evidence="1" type="primary">rplF</name>
    <name type="ordered locus">Pmen_3894</name>
</gene>
<dbReference type="EMBL" id="CP000680">
    <property type="protein sequence ID" value="ABP86641.1"/>
    <property type="molecule type" value="Genomic_DNA"/>
</dbReference>
<dbReference type="SMR" id="A4XZ75"/>
<dbReference type="STRING" id="399739.Pmen_3894"/>
<dbReference type="KEGG" id="pmy:Pmen_3894"/>
<dbReference type="PATRIC" id="fig|399739.8.peg.3947"/>
<dbReference type="eggNOG" id="COG0097">
    <property type="taxonomic scope" value="Bacteria"/>
</dbReference>
<dbReference type="HOGENOM" id="CLU_065464_1_2_6"/>
<dbReference type="OrthoDB" id="9805007at2"/>
<dbReference type="GO" id="GO:0022625">
    <property type="term" value="C:cytosolic large ribosomal subunit"/>
    <property type="evidence" value="ECO:0007669"/>
    <property type="project" value="TreeGrafter"/>
</dbReference>
<dbReference type="GO" id="GO:0019843">
    <property type="term" value="F:rRNA binding"/>
    <property type="evidence" value="ECO:0007669"/>
    <property type="project" value="UniProtKB-UniRule"/>
</dbReference>
<dbReference type="GO" id="GO:0003735">
    <property type="term" value="F:structural constituent of ribosome"/>
    <property type="evidence" value="ECO:0007669"/>
    <property type="project" value="InterPro"/>
</dbReference>
<dbReference type="GO" id="GO:0002181">
    <property type="term" value="P:cytoplasmic translation"/>
    <property type="evidence" value="ECO:0007669"/>
    <property type="project" value="TreeGrafter"/>
</dbReference>
<dbReference type="FunFam" id="3.90.930.12:FF:000001">
    <property type="entry name" value="50S ribosomal protein L6"/>
    <property type="match status" value="1"/>
</dbReference>
<dbReference type="FunFam" id="3.90.930.12:FF:000002">
    <property type="entry name" value="50S ribosomal protein L6"/>
    <property type="match status" value="1"/>
</dbReference>
<dbReference type="Gene3D" id="3.90.930.12">
    <property type="entry name" value="Ribosomal protein L6, alpha-beta domain"/>
    <property type="match status" value="2"/>
</dbReference>
<dbReference type="HAMAP" id="MF_01365_B">
    <property type="entry name" value="Ribosomal_uL6_B"/>
    <property type="match status" value="1"/>
</dbReference>
<dbReference type="InterPro" id="IPR000702">
    <property type="entry name" value="Ribosomal_uL6-like"/>
</dbReference>
<dbReference type="InterPro" id="IPR036789">
    <property type="entry name" value="Ribosomal_uL6-like_a/b-dom_sf"/>
</dbReference>
<dbReference type="InterPro" id="IPR020040">
    <property type="entry name" value="Ribosomal_uL6_a/b-dom"/>
</dbReference>
<dbReference type="InterPro" id="IPR019906">
    <property type="entry name" value="Ribosomal_uL6_bac-type"/>
</dbReference>
<dbReference type="InterPro" id="IPR002358">
    <property type="entry name" value="Ribosomal_uL6_CS"/>
</dbReference>
<dbReference type="NCBIfam" id="TIGR03654">
    <property type="entry name" value="L6_bact"/>
    <property type="match status" value="1"/>
</dbReference>
<dbReference type="PANTHER" id="PTHR11655">
    <property type="entry name" value="60S/50S RIBOSOMAL PROTEIN L6/L9"/>
    <property type="match status" value="1"/>
</dbReference>
<dbReference type="PANTHER" id="PTHR11655:SF14">
    <property type="entry name" value="LARGE RIBOSOMAL SUBUNIT PROTEIN UL6M"/>
    <property type="match status" value="1"/>
</dbReference>
<dbReference type="Pfam" id="PF00347">
    <property type="entry name" value="Ribosomal_L6"/>
    <property type="match status" value="2"/>
</dbReference>
<dbReference type="PIRSF" id="PIRSF002162">
    <property type="entry name" value="Ribosomal_L6"/>
    <property type="match status" value="1"/>
</dbReference>
<dbReference type="PRINTS" id="PR00059">
    <property type="entry name" value="RIBOSOMALL6"/>
</dbReference>
<dbReference type="SUPFAM" id="SSF56053">
    <property type="entry name" value="Ribosomal protein L6"/>
    <property type="match status" value="2"/>
</dbReference>
<dbReference type="PROSITE" id="PS00525">
    <property type="entry name" value="RIBOSOMAL_L6_1"/>
    <property type="match status" value="1"/>
</dbReference>
<reference key="1">
    <citation type="submission" date="2007-04" db="EMBL/GenBank/DDBJ databases">
        <title>Complete sequence of Pseudomonas mendocina ymp.</title>
        <authorList>
            <consortium name="US DOE Joint Genome Institute"/>
            <person name="Copeland A."/>
            <person name="Lucas S."/>
            <person name="Lapidus A."/>
            <person name="Barry K."/>
            <person name="Glavina del Rio T."/>
            <person name="Dalin E."/>
            <person name="Tice H."/>
            <person name="Pitluck S."/>
            <person name="Kiss H."/>
            <person name="Brettin T."/>
            <person name="Detter J.C."/>
            <person name="Bruce D."/>
            <person name="Han C."/>
            <person name="Schmutz J."/>
            <person name="Larimer F."/>
            <person name="Land M."/>
            <person name="Hauser L."/>
            <person name="Kyrpides N."/>
            <person name="Mikhailova N."/>
            <person name="Hersman L."/>
            <person name="Dubois J."/>
            <person name="Maurice P."/>
            <person name="Richardson P."/>
        </authorList>
    </citation>
    <scope>NUCLEOTIDE SEQUENCE [LARGE SCALE GENOMIC DNA]</scope>
    <source>
        <strain>ymp</strain>
    </source>
</reference>
<feature type="chain" id="PRO_1000055288" description="Large ribosomal subunit protein uL6">
    <location>
        <begin position="1"/>
        <end position="177"/>
    </location>
</feature>
<proteinExistence type="inferred from homology"/>